<feature type="chain" id="PRO_0000410342" description="Protein GET1">
    <location>
        <begin position="1"/>
        <end position="215"/>
    </location>
</feature>
<feature type="topological domain" description="Lumenal" evidence="1">
    <location>
        <begin position="1"/>
        <end position="4"/>
    </location>
</feature>
<feature type="transmembrane region" description="Helical" evidence="1">
    <location>
        <begin position="5"/>
        <end position="24"/>
    </location>
</feature>
<feature type="topological domain" description="Cytoplasmic" evidence="1">
    <location>
        <begin position="25"/>
        <end position="108"/>
    </location>
</feature>
<feature type="transmembrane region" description="Helical" evidence="1">
    <location>
        <begin position="109"/>
        <end position="129"/>
    </location>
</feature>
<feature type="topological domain" description="Lumenal" evidence="1">
    <location>
        <begin position="130"/>
        <end position="153"/>
    </location>
</feature>
<feature type="transmembrane region" description="Helical" evidence="1">
    <location>
        <begin position="154"/>
        <end position="170"/>
    </location>
</feature>
<feature type="topological domain" description="Cytoplasmic" evidence="1">
    <location>
        <begin position="171"/>
        <end position="215"/>
    </location>
</feature>
<feature type="region of interest" description="Disordered" evidence="2">
    <location>
        <begin position="181"/>
        <end position="202"/>
    </location>
</feature>
<feature type="coiled-coil region" evidence="1">
    <location>
        <begin position="73"/>
        <end position="94"/>
    </location>
</feature>
<sequence length="215" mass="23895">MINLALVIFLCTLLNQIVSWVGKSVLQEIAFTAYSWVFLSGTAAKQRKLRKQVLEDKAELGRTSSQDEFAKWAKLRRKLDKGLADLEKTNNTLSSSRSSFSKKFSTLLWLMTTGAQFLLSWWFRKQPIFWLPEGWVPYPVAWLLSFPSAPIGSVSSGAWGAICRRVLSTLQEIIQSVLAPSPAATGPVPTGPSSAKNDQPEAKIEALALEHEKLD</sequence>
<gene>
    <name evidence="1" type="primary">GET1</name>
    <name type="ordered locus">CNBG3700</name>
</gene>
<name>GET1_CRYNB</name>
<proteinExistence type="inferred from homology"/>
<protein>
    <recommendedName>
        <fullName evidence="1">Protein GET1</fullName>
    </recommendedName>
    <alternativeName>
        <fullName evidence="1">Guided entry of tail-anchored proteins 1</fullName>
    </alternativeName>
</protein>
<dbReference type="EMBL" id="AAEY01000038">
    <property type="protein sequence ID" value="EAL19742.1"/>
    <property type="molecule type" value="Genomic_DNA"/>
</dbReference>
<dbReference type="RefSeq" id="XP_774389.1">
    <property type="nucleotide sequence ID" value="XM_769296.1"/>
</dbReference>
<dbReference type="SMR" id="P0CS59"/>
<dbReference type="GeneID" id="4937406"/>
<dbReference type="KEGG" id="cnb:CNBG3700"/>
<dbReference type="VEuPathDB" id="FungiDB:CNBG3700"/>
<dbReference type="HOGENOM" id="CLU_089418_0_1_1"/>
<dbReference type="OrthoDB" id="3555at5206"/>
<dbReference type="GO" id="GO:0005789">
    <property type="term" value="C:endoplasmic reticulum membrane"/>
    <property type="evidence" value="ECO:0007669"/>
    <property type="project" value="UniProtKB-SubCell"/>
</dbReference>
<dbReference type="GO" id="GO:0043529">
    <property type="term" value="C:GET complex"/>
    <property type="evidence" value="ECO:0007669"/>
    <property type="project" value="InterPro"/>
</dbReference>
<dbReference type="GO" id="GO:0043495">
    <property type="term" value="F:protein-membrane adaptor activity"/>
    <property type="evidence" value="ECO:0007669"/>
    <property type="project" value="TreeGrafter"/>
</dbReference>
<dbReference type="GO" id="GO:0071816">
    <property type="term" value="P:tail-anchored membrane protein insertion into ER membrane"/>
    <property type="evidence" value="ECO:0007669"/>
    <property type="project" value="InterPro"/>
</dbReference>
<dbReference type="FunFam" id="1.10.287.660:FF:000006">
    <property type="entry name" value="Protein GET1"/>
    <property type="match status" value="1"/>
</dbReference>
<dbReference type="Gene3D" id="1.10.287.660">
    <property type="entry name" value="Helix hairpin bin"/>
    <property type="match status" value="1"/>
</dbReference>
<dbReference type="HAMAP" id="MF_03113">
    <property type="entry name" value="Get1"/>
    <property type="match status" value="1"/>
</dbReference>
<dbReference type="InterPro" id="IPR028945">
    <property type="entry name" value="Get1"/>
</dbReference>
<dbReference type="InterPro" id="IPR027538">
    <property type="entry name" value="Get1_fungi"/>
</dbReference>
<dbReference type="InterPro" id="IPR029012">
    <property type="entry name" value="Helix_hairpin_bin_sf"/>
</dbReference>
<dbReference type="PANTHER" id="PTHR42650:SF1">
    <property type="entry name" value="GUIDED ENTRY OF TAIL-ANCHORED PROTEINS FACTOR 1"/>
    <property type="match status" value="1"/>
</dbReference>
<dbReference type="PANTHER" id="PTHR42650">
    <property type="entry name" value="TAIL-ANCHORED PROTEIN INSERTION RECEPTOR WRB"/>
    <property type="match status" value="1"/>
</dbReference>
<dbReference type="Pfam" id="PF04420">
    <property type="entry name" value="CHD5"/>
    <property type="match status" value="1"/>
</dbReference>
<comment type="function">
    <text evidence="1">Required for the post-translational delivery of tail-anchored (TA) proteins to the endoplasmic reticulum. Acts as a membrane receptor for soluble GET3, which recognizes and selectively binds the transmembrane domain of TA proteins in the cytosol.</text>
</comment>
<comment type="subunit">
    <text evidence="1">Interacts with GET3.</text>
</comment>
<comment type="subcellular location">
    <subcellularLocation>
        <location evidence="1">Endoplasmic reticulum membrane</location>
        <topology evidence="1">Multi-pass membrane protein</topology>
    </subcellularLocation>
</comment>
<comment type="similarity">
    <text evidence="1">Belongs to the WRB/GET1 family.</text>
</comment>
<reference key="1">
    <citation type="journal article" date="2005" name="Science">
        <title>The genome of the basidiomycetous yeast and human pathogen Cryptococcus neoformans.</title>
        <authorList>
            <person name="Loftus B.J."/>
            <person name="Fung E."/>
            <person name="Roncaglia P."/>
            <person name="Rowley D."/>
            <person name="Amedeo P."/>
            <person name="Bruno D."/>
            <person name="Vamathevan J."/>
            <person name="Miranda M."/>
            <person name="Anderson I.J."/>
            <person name="Fraser J.A."/>
            <person name="Allen J.E."/>
            <person name="Bosdet I.E."/>
            <person name="Brent M.R."/>
            <person name="Chiu R."/>
            <person name="Doering T.L."/>
            <person name="Donlin M.J."/>
            <person name="D'Souza C.A."/>
            <person name="Fox D.S."/>
            <person name="Grinberg V."/>
            <person name="Fu J."/>
            <person name="Fukushima M."/>
            <person name="Haas B.J."/>
            <person name="Huang J.C."/>
            <person name="Janbon G."/>
            <person name="Jones S.J.M."/>
            <person name="Koo H.L."/>
            <person name="Krzywinski M.I."/>
            <person name="Kwon-Chung K.J."/>
            <person name="Lengeler K.B."/>
            <person name="Maiti R."/>
            <person name="Marra M.A."/>
            <person name="Marra R.E."/>
            <person name="Mathewson C.A."/>
            <person name="Mitchell T.G."/>
            <person name="Pertea M."/>
            <person name="Riggs F.R."/>
            <person name="Salzberg S.L."/>
            <person name="Schein J.E."/>
            <person name="Shvartsbeyn A."/>
            <person name="Shin H."/>
            <person name="Shumway M."/>
            <person name="Specht C.A."/>
            <person name="Suh B.B."/>
            <person name="Tenney A."/>
            <person name="Utterback T.R."/>
            <person name="Wickes B.L."/>
            <person name="Wortman J.R."/>
            <person name="Wye N.H."/>
            <person name="Kronstad J.W."/>
            <person name="Lodge J.K."/>
            <person name="Heitman J."/>
            <person name="Davis R.W."/>
            <person name="Fraser C.M."/>
            <person name="Hyman R.W."/>
        </authorList>
    </citation>
    <scope>NUCLEOTIDE SEQUENCE [LARGE SCALE GENOMIC DNA]</scope>
    <source>
        <strain>B-3501A</strain>
    </source>
</reference>
<evidence type="ECO:0000255" key="1">
    <source>
        <dbReference type="HAMAP-Rule" id="MF_03113"/>
    </source>
</evidence>
<evidence type="ECO:0000256" key="2">
    <source>
        <dbReference type="SAM" id="MobiDB-lite"/>
    </source>
</evidence>
<keyword id="KW-0175">Coiled coil</keyword>
<keyword id="KW-0256">Endoplasmic reticulum</keyword>
<keyword id="KW-0472">Membrane</keyword>
<keyword id="KW-0812">Transmembrane</keyword>
<keyword id="KW-1133">Transmembrane helix</keyword>
<keyword id="KW-0813">Transport</keyword>
<accession>P0CS59</accession>
<accession>Q55P42</accession>
<accession>Q5KEB4</accession>
<organism>
    <name type="scientific">Cryptococcus neoformans var. neoformans serotype D (strain B-3501A)</name>
    <name type="common">Filobasidiella neoformans</name>
    <dbReference type="NCBI Taxonomy" id="283643"/>
    <lineage>
        <taxon>Eukaryota</taxon>
        <taxon>Fungi</taxon>
        <taxon>Dikarya</taxon>
        <taxon>Basidiomycota</taxon>
        <taxon>Agaricomycotina</taxon>
        <taxon>Tremellomycetes</taxon>
        <taxon>Tremellales</taxon>
        <taxon>Cryptococcaceae</taxon>
        <taxon>Cryptococcus</taxon>
        <taxon>Cryptococcus neoformans species complex</taxon>
    </lineage>
</organism>